<reference key="1">
    <citation type="journal article" date="2000" name="Microbiology">
        <title>The genes for erythritol catabolism are organized as an inducible operon in Brucella abortus.</title>
        <authorList>
            <person name="Sangari F.J."/>
            <person name="Aguero J."/>
            <person name="Garcia-Lobo J.M."/>
        </authorList>
    </citation>
    <scope>NUCLEOTIDE SEQUENCE [GENOMIC DNA]</scope>
    <scope>INDUCTION</scope>
    <source>
        <strain>2308</strain>
    </source>
</reference>
<reference key="2">
    <citation type="journal article" date="2005" name="Infect. Immun.">
        <title>Whole-genome analyses of speciation events in pathogenic Brucellae.</title>
        <authorList>
            <person name="Chain P.S."/>
            <person name="Comerci D.J."/>
            <person name="Tolmasky M.E."/>
            <person name="Larimer F.W."/>
            <person name="Malfatti S.A."/>
            <person name="Vergez L.M."/>
            <person name="Aguero F."/>
            <person name="Land M.L."/>
            <person name="Ugalde R.A."/>
            <person name="Garcia E."/>
        </authorList>
    </citation>
    <scope>NUCLEOTIDE SEQUENCE [LARGE SCALE GENOMIC DNA]</scope>
    <source>
        <strain>2308</strain>
    </source>
</reference>
<reference key="3">
    <citation type="journal article" date="2003" name="Bioorg. Med. Chem. Lett.">
        <title>Functional expression and characterization of EryA, the erythritol kinase of Brucella abortus, and enzymatic synthesis of L-erythritol-4-phosphate.</title>
        <authorList>
            <person name="Lillo A.M."/>
            <person name="Tetzlaff C.N."/>
            <person name="Sangari F.J."/>
            <person name="Cane D.E."/>
        </authorList>
    </citation>
    <scope>FUNCTION</scope>
    <scope>CATALYTIC ACTIVITY</scope>
    <scope>BIOPHYSICOCHEMICAL PROPERTIES</scope>
    <scope>PATHWAY</scope>
    <source>
        <strain>2308</strain>
    </source>
</reference>
<feature type="chain" id="PRO_0000418773" description="Erythritol kinase">
    <location>
        <begin position="1"/>
        <end position="520"/>
    </location>
</feature>
<gene>
    <name evidence="3" type="primary">eryA</name>
    <name type="ordered locus">BAB2_0372</name>
</gene>
<evidence type="ECO:0000269" key="1">
    <source>
    </source>
</evidence>
<evidence type="ECO:0000269" key="2">
    <source>
    </source>
</evidence>
<evidence type="ECO:0000303" key="3">
    <source>
    </source>
</evidence>
<evidence type="ECO:0000305" key="4"/>
<protein>
    <recommendedName>
        <fullName>Erythritol kinase</fullName>
        <ecNumber evidence="2">2.7.1.215</ecNumber>
    </recommendedName>
</protein>
<keyword id="KW-0067">ATP-binding</keyword>
<keyword id="KW-0418">Kinase</keyword>
<keyword id="KW-0547">Nucleotide-binding</keyword>
<keyword id="KW-1185">Reference proteome</keyword>
<keyword id="KW-0808">Transferase</keyword>
<comment type="function">
    <text evidence="2">Catalyzes the phosphorylation of erythritol to D-erythritol-1-phosphate.</text>
</comment>
<comment type="catalytic activity">
    <reaction evidence="2">
        <text>erythritol + ATP = D-erythritol 1-phosphate + ADP + H(+)</text>
        <dbReference type="Rhea" id="RHEA:49624"/>
        <dbReference type="ChEBI" id="CHEBI:15378"/>
        <dbReference type="ChEBI" id="CHEBI:17113"/>
        <dbReference type="ChEBI" id="CHEBI:30616"/>
        <dbReference type="ChEBI" id="CHEBI:131849"/>
        <dbReference type="ChEBI" id="CHEBI:456216"/>
        <dbReference type="EC" id="2.7.1.215"/>
    </reaction>
</comment>
<comment type="biophysicochemical properties">
    <kinetics>
        <KM evidence="2">0.26 mM for erythritol</KM>
        <KM evidence="2">9.8 mM for ATP</KM>
    </kinetics>
</comment>
<comment type="pathway">
    <text evidence="2">Carbohydrate metabolism; erythritol degradation.</text>
</comment>
<comment type="induction">
    <text evidence="1">Induced by erythritol and repressed by EryD.</text>
</comment>
<comment type="similarity">
    <text evidence="4">Belongs to the FGGY kinase family.</text>
</comment>
<comment type="sequence caution" evidence="4">
    <conflict type="erroneous initiation">
        <sequence resource="EMBL-CDS" id="CAJ12538"/>
    </conflict>
    <text>Truncated N-terminus.</text>
</comment>
<accession>Q2YIQ1</accession>
<accession>Q578Y5</accession>
<accession>Q9ZB32</accession>
<organism>
    <name type="scientific">Brucella abortus (strain 2308)</name>
    <dbReference type="NCBI Taxonomy" id="359391"/>
    <lineage>
        <taxon>Bacteria</taxon>
        <taxon>Pseudomonadati</taxon>
        <taxon>Pseudomonadota</taxon>
        <taxon>Alphaproteobacteria</taxon>
        <taxon>Hyphomicrobiales</taxon>
        <taxon>Brucellaceae</taxon>
        <taxon>Brucella/Ochrobactrum group</taxon>
        <taxon>Brucella</taxon>
    </lineage>
</organism>
<dbReference type="EC" id="2.7.1.215" evidence="2"/>
<dbReference type="EMBL" id="U57100">
    <property type="protein sequence ID" value="AAD11519.2"/>
    <property type="molecule type" value="Genomic_DNA"/>
</dbReference>
<dbReference type="EMBL" id="AM040265">
    <property type="protein sequence ID" value="CAJ12538.1"/>
    <property type="status" value="ALT_INIT"/>
    <property type="molecule type" value="Genomic_DNA"/>
</dbReference>
<dbReference type="SMR" id="Q2YIQ1"/>
<dbReference type="STRING" id="359391.BAB2_0372"/>
<dbReference type="KEGG" id="bmf:BAB2_0372"/>
<dbReference type="HOGENOM" id="CLU_009281_3_1_5"/>
<dbReference type="BioCyc" id="MetaCyc:MONOMER-19884"/>
<dbReference type="BRENDA" id="2.7.1.215">
    <property type="organism ID" value="994"/>
</dbReference>
<dbReference type="SABIO-RK" id="Q2YIQ1"/>
<dbReference type="UniPathway" id="UPA01066"/>
<dbReference type="Proteomes" id="UP000002719">
    <property type="component" value="Chromosome II"/>
</dbReference>
<dbReference type="GO" id="GO:0005524">
    <property type="term" value="F:ATP binding"/>
    <property type="evidence" value="ECO:0007669"/>
    <property type="project" value="UniProtKB-KW"/>
</dbReference>
<dbReference type="GO" id="GO:0047878">
    <property type="term" value="F:erythritol kinase activity"/>
    <property type="evidence" value="ECO:0000314"/>
    <property type="project" value="UniProtKB"/>
</dbReference>
<dbReference type="GO" id="GO:0005975">
    <property type="term" value="P:carbohydrate metabolic process"/>
    <property type="evidence" value="ECO:0007669"/>
    <property type="project" value="InterPro"/>
</dbReference>
<dbReference type="GO" id="GO:0016310">
    <property type="term" value="P:phosphorylation"/>
    <property type="evidence" value="ECO:0000314"/>
    <property type="project" value="UniProtKB"/>
</dbReference>
<dbReference type="CDD" id="cd24121">
    <property type="entry name" value="ASKHA_NBD_FGGY_BaEryA-like"/>
    <property type="match status" value="1"/>
</dbReference>
<dbReference type="Gene3D" id="3.30.420.40">
    <property type="match status" value="2"/>
</dbReference>
<dbReference type="InterPro" id="IPR043129">
    <property type="entry name" value="ATPase_NBD"/>
</dbReference>
<dbReference type="InterPro" id="IPR000577">
    <property type="entry name" value="Carb_kinase_FGGY"/>
</dbReference>
<dbReference type="InterPro" id="IPR018483">
    <property type="entry name" value="Carb_kinase_FGGY_CS"/>
</dbReference>
<dbReference type="InterPro" id="IPR018485">
    <property type="entry name" value="FGGY_C"/>
</dbReference>
<dbReference type="InterPro" id="IPR050406">
    <property type="entry name" value="FGGY_Carb_Kinase"/>
</dbReference>
<dbReference type="InterPro" id="IPR018484">
    <property type="entry name" value="FGGY_N"/>
</dbReference>
<dbReference type="PANTHER" id="PTHR43095">
    <property type="entry name" value="SUGAR KINASE"/>
    <property type="match status" value="1"/>
</dbReference>
<dbReference type="PANTHER" id="PTHR43095:SF5">
    <property type="entry name" value="XYLULOSE KINASE"/>
    <property type="match status" value="1"/>
</dbReference>
<dbReference type="Pfam" id="PF02782">
    <property type="entry name" value="FGGY_C"/>
    <property type="match status" value="1"/>
</dbReference>
<dbReference type="Pfam" id="PF00370">
    <property type="entry name" value="FGGY_N"/>
    <property type="match status" value="1"/>
</dbReference>
<dbReference type="PIRSF" id="PIRSF000538">
    <property type="entry name" value="GlpK"/>
    <property type="match status" value="1"/>
</dbReference>
<dbReference type="SUPFAM" id="SSF53067">
    <property type="entry name" value="Actin-like ATPase domain"/>
    <property type="match status" value="2"/>
</dbReference>
<dbReference type="PROSITE" id="PS00445">
    <property type="entry name" value="FGGY_KINASES_2"/>
    <property type="match status" value="1"/>
</dbReference>
<name>ERYA_BRUA2</name>
<sequence>MSAMREKGDIIIGIDAGTSVLKAVAFDFSGRQIESAAVRNTYVTGDHGAVTQSLAQTWQDCARALRDLGAKLPGLAQRTAAIAVTGQGDGTWLVGKDNRPVGDAWIWLDARAASTVTRLAAGPMNRARFEATGTGLNTCQQGAQMAHMDTIAPELLDNAEAALHCKDWLYLNLTGVRATDPSEASFTFGNFRTRQYDDVVIEALGLQKRRNLLPEIIDGSQSQHPLSAEAAAATGLLAGTPVSLGYVDMAMTALGAGVCGGTAGAGCSTIGSTGVHMRAKPVADIHLNKEGTGYVIALPIPGIVTQVQTNMGATINIDWILQVAADLMSTPEKPVSLGDLIPRLDDWFNASRPGAILYHPYISEAGERGPFVNANARAGFIGLSSRDRFPELVRSVVEGLGMATRDCYAAMGEMPAELRITGGAARSKALRGTLSAAVNAPVRVSAREEAGAAGAAMMAAVAIGAYPAMDDCIAEWVEPLLGASEAPDAARAHQYEELFVAYREARLALAPVWDKLASGK</sequence>
<proteinExistence type="evidence at protein level"/>